<reference key="1">
    <citation type="journal article" date="1992" name="Yeast">
        <title>The sequence of a 12 kb fragment on the left arm of yeast chromosome XI reveals five new open reading frames, including a zinc finger protein and a homolog of the UDP-glucose pyrophosphorylase from potato.</title>
        <authorList>
            <person name="Purnelle B."/>
            <person name="Skala J."/>
            <person name="van Dyck L."/>
            <person name="Goffeau A."/>
        </authorList>
    </citation>
    <scope>NUCLEOTIDE SEQUENCE [GENOMIC DNA]</scope>
    <source>
        <strain>ATCC 204508 / S288c</strain>
    </source>
</reference>
<reference key="2">
    <citation type="journal article" date="1994" name="Nature">
        <title>Complete DNA sequence of yeast chromosome XI.</title>
        <authorList>
            <person name="Dujon B."/>
            <person name="Alexandraki D."/>
            <person name="Andre B."/>
            <person name="Ansorge W."/>
            <person name="Baladron V."/>
            <person name="Ballesta J.P.G."/>
            <person name="Banrevi A."/>
            <person name="Bolle P.-A."/>
            <person name="Bolotin-Fukuhara M."/>
            <person name="Bossier P."/>
            <person name="Bou G."/>
            <person name="Boyer J."/>
            <person name="Buitrago M.J."/>
            <person name="Cheret G."/>
            <person name="Colleaux L."/>
            <person name="Daignan-Fornier B."/>
            <person name="del Rey F."/>
            <person name="Dion C."/>
            <person name="Domdey H."/>
            <person name="Duesterhoeft A."/>
            <person name="Duesterhus S."/>
            <person name="Entian K.-D."/>
            <person name="Erfle H."/>
            <person name="Esteban P.F."/>
            <person name="Feldmann H."/>
            <person name="Fernandes L."/>
            <person name="Fobo G.M."/>
            <person name="Fritz C."/>
            <person name="Fukuhara H."/>
            <person name="Gabel C."/>
            <person name="Gaillon L."/>
            <person name="Garcia-Cantalejo J.M."/>
            <person name="Garcia-Ramirez J.J."/>
            <person name="Gent M.E."/>
            <person name="Ghazvini M."/>
            <person name="Goffeau A."/>
            <person name="Gonzalez A."/>
            <person name="Grothues D."/>
            <person name="Guerreiro P."/>
            <person name="Hegemann J.H."/>
            <person name="Hewitt N."/>
            <person name="Hilger F."/>
            <person name="Hollenberg C.P."/>
            <person name="Horaitis O."/>
            <person name="Indge K.J."/>
            <person name="Jacquier A."/>
            <person name="James C.M."/>
            <person name="Jauniaux J.-C."/>
            <person name="Jimenez A."/>
            <person name="Keuchel H."/>
            <person name="Kirchrath L."/>
            <person name="Kleine K."/>
            <person name="Koetter P."/>
            <person name="Legrain P."/>
            <person name="Liebl S."/>
            <person name="Louis E.J."/>
            <person name="Maia e Silva A."/>
            <person name="Marck C."/>
            <person name="Monnier A.-L."/>
            <person name="Moestl D."/>
            <person name="Mueller S."/>
            <person name="Obermaier B."/>
            <person name="Oliver S.G."/>
            <person name="Pallier C."/>
            <person name="Pascolo S."/>
            <person name="Pfeiffer F."/>
            <person name="Philippsen P."/>
            <person name="Planta R.J."/>
            <person name="Pohl F.M."/>
            <person name="Pohl T.M."/>
            <person name="Poehlmann R."/>
            <person name="Portetelle D."/>
            <person name="Purnelle B."/>
            <person name="Puzos V."/>
            <person name="Ramezani Rad M."/>
            <person name="Rasmussen S.W."/>
            <person name="Remacha M.A."/>
            <person name="Revuelta J.L."/>
            <person name="Richard G.-F."/>
            <person name="Rieger M."/>
            <person name="Rodrigues-Pousada C."/>
            <person name="Rose M."/>
            <person name="Rupp T."/>
            <person name="Santos M.A."/>
            <person name="Schwager C."/>
            <person name="Sensen C."/>
            <person name="Skala J."/>
            <person name="Soares H."/>
            <person name="Sor F."/>
            <person name="Stegemann J."/>
            <person name="Tettelin H."/>
            <person name="Thierry A."/>
            <person name="Tzermia M."/>
            <person name="Urrestarazu L.A."/>
            <person name="van Dyck L."/>
            <person name="van Vliet-Reedijk J.C."/>
            <person name="Valens M."/>
            <person name="Vandenbol M."/>
            <person name="Vilela C."/>
            <person name="Vissers S."/>
            <person name="von Wettstein D."/>
            <person name="Voss H."/>
            <person name="Wiemann S."/>
            <person name="Xu G."/>
            <person name="Zimmermann J."/>
            <person name="Haasemann M."/>
            <person name="Becker I."/>
            <person name="Mewes H.-W."/>
        </authorList>
    </citation>
    <scope>NUCLEOTIDE SEQUENCE [LARGE SCALE GENOMIC DNA]</scope>
    <source>
        <strain>ATCC 204508 / S288c</strain>
    </source>
</reference>
<reference key="3">
    <citation type="journal article" date="2014" name="G3 (Bethesda)">
        <title>The reference genome sequence of Saccharomyces cerevisiae: Then and now.</title>
        <authorList>
            <person name="Engel S.R."/>
            <person name="Dietrich F.S."/>
            <person name="Fisk D.G."/>
            <person name="Binkley G."/>
            <person name="Balakrishnan R."/>
            <person name="Costanzo M.C."/>
            <person name="Dwight S.S."/>
            <person name="Hitz B.C."/>
            <person name="Karra K."/>
            <person name="Nash R.S."/>
            <person name="Weng S."/>
            <person name="Wong E.D."/>
            <person name="Lloyd P."/>
            <person name="Skrzypek M.S."/>
            <person name="Miyasato S.R."/>
            <person name="Simison M."/>
            <person name="Cherry J.M."/>
        </authorList>
    </citation>
    <scope>GENOME REANNOTATION</scope>
    <source>
        <strain>ATCC 204508 / S288c</strain>
    </source>
</reference>
<organism>
    <name type="scientific">Saccharomyces cerevisiae (strain ATCC 204508 / S288c)</name>
    <name type="common">Baker's yeast</name>
    <dbReference type="NCBI Taxonomy" id="559292"/>
    <lineage>
        <taxon>Eukaryota</taxon>
        <taxon>Fungi</taxon>
        <taxon>Dikarya</taxon>
        <taxon>Ascomycota</taxon>
        <taxon>Saccharomycotina</taxon>
        <taxon>Saccharomycetes</taxon>
        <taxon>Saccharomycetales</taxon>
        <taxon>Saccharomycetaceae</taxon>
        <taxon>Saccharomyces</taxon>
    </lineage>
</organism>
<gene>
    <name type="ordered locus">YKL036C</name>
    <name type="ORF">YKL249</name>
</gene>
<comment type="miscellaneous">
    <text evidence="2">Partially overlaps UGP1 and YKL037W.</text>
</comment>
<comment type="caution">
    <text evidence="3">Product of a dubious gene prediction unlikely to encode a functional protein. Because of that it is not part of the S.cerevisiae S288c complete/reference proteome set.</text>
</comment>
<sequence>MCFGVLLSGHYYVMVHLLWKLYYIIGRGLGLLTLLMWKEPEIESPTPKTVTSISWYLLEELCCLFRFIYSIQNRERKCKNGPSPNKRGSASGCSRRGGGRGSGYKTLYRDLCENKPTPELWTLQAPELNL</sequence>
<protein>
    <recommendedName>
        <fullName>Putative uncharacterized protein YKL036C</fullName>
    </recommendedName>
</protein>
<name>YKD6_YEAST</name>
<proteinExistence type="uncertain"/>
<dbReference type="EMBL" id="X69584">
    <property type="protein sequence ID" value="CAA49304.1"/>
    <property type="molecule type" value="Genomic_DNA"/>
</dbReference>
<dbReference type="EMBL" id="Z28035">
    <property type="protein sequence ID" value="CAA81871.1"/>
    <property type="molecule type" value="Genomic_DNA"/>
</dbReference>
<dbReference type="PIR" id="S30008">
    <property type="entry name" value="S30008"/>
</dbReference>
<dbReference type="DIP" id="DIP-2120N"/>
<dbReference type="PaxDb" id="4932-YKL036C"/>
<dbReference type="EnsemblFungi" id="YKL036C_mRNA">
    <property type="protein sequence ID" value="YKL036C"/>
    <property type="gene ID" value="YKL036C"/>
</dbReference>
<dbReference type="AGR" id="SGD:S000001519"/>
<dbReference type="SGD" id="S000001519">
    <property type="gene designation" value="YKL036C"/>
</dbReference>
<dbReference type="HOGENOM" id="CLU_1939754_0_0_1"/>
<dbReference type="ChiTaRS" id="YKL036C">
    <property type="organism name" value="yeast"/>
</dbReference>
<feature type="chain" id="PRO_0000203184" description="Putative uncharacterized protein YKL036C">
    <location>
        <begin position="1"/>
        <end position="130"/>
    </location>
</feature>
<feature type="region of interest" description="Disordered" evidence="1">
    <location>
        <begin position="76"/>
        <end position="102"/>
    </location>
</feature>
<evidence type="ECO:0000256" key="1">
    <source>
        <dbReference type="SAM" id="MobiDB-lite"/>
    </source>
</evidence>
<evidence type="ECO:0000305" key="2"/>
<evidence type="ECO:0000305" key="3">
    <source>
    </source>
</evidence>
<accession>P32859</accession>